<evidence type="ECO:0000255" key="1">
    <source>
        <dbReference type="HAMAP-Rule" id="MF_00051"/>
    </source>
</evidence>
<sequence>MYEPTLTVESFDSELAGAIRDERRRQEHHVELIASENYVSPRVLELQGSVLTNKYAEGYPGRRYYGGCEFVDIAEQLAIDRAKELFGADYANVQPHSGSQANAEAYMALMNPGDTLLAMDLSHGGHLTHGSPVSFSGKFYKAVHYGLNAHGDIDYEQAAQLAQEHKPKVILAGFSAFSGIVDWQRFREIADSVNAYFMTDIAHVAGLVAAGVYPSPVQIADVTTTTTHKTLRGPRAGLILAKANPELEKRLNSAVFPGSQGGPLMHIIAAKAVAFKEAMQPEFKTYAQQILKNAKAMAEVMKERGYTIVSGGTQNHLFLVSLLDKNISGKEAEAALGRANITVNKNTVPGETRSPFVTSGLRIGTPAITTRGFKEKEASQLAHWVCDILDDIHNEKVIADVKQKAHELCGKFPVYQELD</sequence>
<organism>
    <name type="scientific">Coxiella burnetii (strain Dugway 5J108-111)</name>
    <dbReference type="NCBI Taxonomy" id="434922"/>
    <lineage>
        <taxon>Bacteria</taxon>
        <taxon>Pseudomonadati</taxon>
        <taxon>Pseudomonadota</taxon>
        <taxon>Gammaproteobacteria</taxon>
        <taxon>Legionellales</taxon>
        <taxon>Coxiellaceae</taxon>
        <taxon>Coxiella</taxon>
    </lineage>
</organism>
<keyword id="KW-0028">Amino-acid biosynthesis</keyword>
<keyword id="KW-0963">Cytoplasm</keyword>
<keyword id="KW-0554">One-carbon metabolism</keyword>
<keyword id="KW-0663">Pyridoxal phosphate</keyword>
<keyword id="KW-0808">Transferase</keyword>
<reference key="1">
    <citation type="journal article" date="2009" name="Infect. Immun.">
        <title>Comparative genomics reveal extensive transposon-mediated genomic plasticity and diversity among potential effector proteins within the genus Coxiella.</title>
        <authorList>
            <person name="Beare P.A."/>
            <person name="Unsworth N."/>
            <person name="Andoh M."/>
            <person name="Voth D.E."/>
            <person name="Omsland A."/>
            <person name="Gilk S.D."/>
            <person name="Williams K.P."/>
            <person name="Sobral B.W."/>
            <person name="Kupko J.J. III"/>
            <person name="Porcella S.F."/>
            <person name="Samuel J.E."/>
            <person name="Heinzen R.A."/>
        </authorList>
    </citation>
    <scope>NUCLEOTIDE SEQUENCE [LARGE SCALE GENOMIC DNA]</scope>
    <source>
        <strain>Dugway 5J108-111</strain>
    </source>
</reference>
<feature type="chain" id="PRO_1000074892" description="Serine hydroxymethyltransferase">
    <location>
        <begin position="1"/>
        <end position="419"/>
    </location>
</feature>
<feature type="binding site" evidence="1">
    <location>
        <position position="121"/>
    </location>
    <ligand>
        <name>(6S)-5,6,7,8-tetrahydrofolate</name>
        <dbReference type="ChEBI" id="CHEBI:57453"/>
    </ligand>
</feature>
<feature type="binding site" evidence="1">
    <location>
        <begin position="125"/>
        <end position="127"/>
    </location>
    <ligand>
        <name>(6S)-5,6,7,8-tetrahydrofolate</name>
        <dbReference type="ChEBI" id="CHEBI:57453"/>
    </ligand>
</feature>
<feature type="binding site" evidence="1">
    <location>
        <begin position="354"/>
        <end position="356"/>
    </location>
    <ligand>
        <name>(6S)-5,6,7,8-tetrahydrofolate</name>
        <dbReference type="ChEBI" id="CHEBI:57453"/>
    </ligand>
</feature>
<feature type="site" description="Plays an important role in substrate specificity" evidence="1">
    <location>
        <position position="228"/>
    </location>
</feature>
<feature type="modified residue" description="N6-(pyridoxal phosphate)lysine" evidence="1">
    <location>
        <position position="229"/>
    </location>
</feature>
<name>GLYA_COXBN</name>
<proteinExistence type="inferred from homology"/>
<accession>A9KBN4</accession>
<comment type="function">
    <text evidence="1">Catalyzes the reversible interconversion of serine and glycine with tetrahydrofolate (THF) serving as the one-carbon carrier. This reaction serves as the major source of one-carbon groups required for the biosynthesis of purines, thymidylate, methionine, and other important biomolecules. Also exhibits THF-independent aldolase activity toward beta-hydroxyamino acids, producing glycine and aldehydes, via a retro-aldol mechanism.</text>
</comment>
<comment type="catalytic activity">
    <reaction evidence="1">
        <text>(6R)-5,10-methylene-5,6,7,8-tetrahydrofolate + glycine + H2O = (6S)-5,6,7,8-tetrahydrofolate + L-serine</text>
        <dbReference type="Rhea" id="RHEA:15481"/>
        <dbReference type="ChEBI" id="CHEBI:15377"/>
        <dbReference type="ChEBI" id="CHEBI:15636"/>
        <dbReference type="ChEBI" id="CHEBI:33384"/>
        <dbReference type="ChEBI" id="CHEBI:57305"/>
        <dbReference type="ChEBI" id="CHEBI:57453"/>
        <dbReference type="EC" id="2.1.2.1"/>
    </reaction>
</comment>
<comment type="cofactor">
    <cofactor evidence="1">
        <name>pyridoxal 5'-phosphate</name>
        <dbReference type="ChEBI" id="CHEBI:597326"/>
    </cofactor>
</comment>
<comment type="pathway">
    <text evidence="1">One-carbon metabolism; tetrahydrofolate interconversion.</text>
</comment>
<comment type="pathway">
    <text evidence="1">Amino-acid biosynthesis; glycine biosynthesis; glycine from L-serine: step 1/1.</text>
</comment>
<comment type="subunit">
    <text evidence="1">Homodimer.</text>
</comment>
<comment type="subcellular location">
    <subcellularLocation>
        <location evidence="1">Cytoplasm</location>
    </subcellularLocation>
</comment>
<comment type="similarity">
    <text evidence="1">Belongs to the SHMT family.</text>
</comment>
<gene>
    <name evidence="1" type="primary">glyA</name>
    <name type="ordered locus">CBUD_0577</name>
</gene>
<dbReference type="EC" id="2.1.2.1" evidence="1"/>
<dbReference type="EMBL" id="CP000733">
    <property type="protein sequence ID" value="ABS78461.1"/>
    <property type="molecule type" value="Genomic_DNA"/>
</dbReference>
<dbReference type="RefSeq" id="WP_010958216.1">
    <property type="nucleotide sequence ID" value="NC_009727.1"/>
</dbReference>
<dbReference type="SMR" id="A9KBN4"/>
<dbReference type="KEGG" id="cbd:CBUD_0577"/>
<dbReference type="HOGENOM" id="CLU_022477_2_1_6"/>
<dbReference type="UniPathway" id="UPA00193"/>
<dbReference type="UniPathway" id="UPA00288">
    <property type="reaction ID" value="UER01023"/>
</dbReference>
<dbReference type="Proteomes" id="UP000008555">
    <property type="component" value="Chromosome"/>
</dbReference>
<dbReference type="GO" id="GO:0005829">
    <property type="term" value="C:cytosol"/>
    <property type="evidence" value="ECO:0007669"/>
    <property type="project" value="TreeGrafter"/>
</dbReference>
<dbReference type="GO" id="GO:0004372">
    <property type="term" value="F:glycine hydroxymethyltransferase activity"/>
    <property type="evidence" value="ECO:0007669"/>
    <property type="project" value="UniProtKB-UniRule"/>
</dbReference>
<dbReference type="GO" id="GO:0030170">
    <property type="term" value="F:pyridoxal phosphate binding"/>
    <property type="evidence" value="ECO:0007669"/>
    <property type="project" value="UniProtKB-UniRule"/>
</dbReference>
<dbReference type="GO" id="GO:0019264">
    <property type="term" value="P:glycine biosynthetic process from serine"/>
    <property type="evidence" value="ECO:0007669"/>
    <property type="project" value="UniProtKB-UniRule"/>
</dbReference>
<dbReference type="GO" id="GO:0035999">
    <property type="term" value="P:tetrahydrofolate interconversion"/>
    <property type="evidence" value="ECO:0007669"/>
    <property type="project" value="UniProtKB-UniRule"/>
</dbReference>
<dbReference type="CDD" id="cd00378">
    <property type="entry name" value="SHMT"/>
    <property type="match status" value="1"/>
</dbReference>
<dbReference type="FunFam" id="3.40.640.10:FF:000001">
    <property type="entry name" value="Serine hydroxymethyltransferase"/>
    <property type="match status" value="1"/>
</dbReference>
<dbReference type="FunFam" id="3.90.1150.10:FF:000003">
    <property type="entry name" value="Serine hydroxymethyltransferase"/>
    <property type="match status" value="1"/>
</dbReference>
<dbReference type="Gene3D" id="3.90.1150.10">
    <property type="entry name" value="Aspartate Aminotransferase, domain 1"/>
    <property type="match status" value="1"/>
</dbReference>
<dbReference type="Gene3D" id="3.40.640.10">
    <property type="entry name" value="Type I PLP-dependent aspartate aminotransferase-like (Major domain)"/>
    <property type="match status" value="1"/>
</dbReference>
<dbReference type="HAMAP" id="MF_00051">
    <property type="entry name" value="SHMT"/>
    <property type="match status" value="1"/>
</dbReference>
<dbReference type="InterPro" id="IPR015424">
    <property type="entry name" value="PyrdxlP-dep_Trfase"/>
</dbReference>
<dbReference type="InterPro" id="IPR015421">
    <property type="entry name" value="PyrdxlP-dep_Trfase_major"/>
</dbReference>
<dbReference type="InterPro" id="IPR015422">
    <property type="entry name" value="PyrdxlP-dep_Trfase_small"/>
</dbReference>
<dbReference type="InterPro" id="IPR001085">
    <property type="entry name" value="Ser_HO-MeTrfase"/>
</dbReference>
<dbReference type="InterPro" id="IPR049943">
    <property type="entry name" value="Ser_HO-MeTrfase-like"/>
</dbReference>
<dbReference type="InterPro" id="IPR019798">
    <property type="entry name" value="Ser_HO-MeTrfase_PLP_BS"/>
</dbReference>
<dbReference type="InterPro" id="IPR039429">
    <property type="entry name" value="SHMT-like_dom"/>
</dbReference>
<dbReference type="NCBIfam" id="NF000586">
    <property type="entry name" value="PRK00011.1"/>
    <property type="match status" value="1"/>
</dbReference>
<dbReference type="PANTHER" id="PTHR11680">
    <property type="entry name" value="SERINE HYDROXYMETHYLTRANSFERASE"/>
    <property type="match status" value="1"/>
</dbReference>
<dbReference type="PANTHER" id="PTHR11680:SF50">
    <property type="entry name" value="SERINE HYDROXYMETHYLTRANSFERASE"/>
    <property type="match status" value="1"/>
</dbReference>
<dbReference type="Pfam" id="PF00464">
    <property type="entry name" value="SHMT"/>
    <property type="match status" value="1"/>
</dbReference>
<dbReference type="PIRSF" id="PIRSF000412">
    <property type="entry name" value="SHMT"/>
    <property type="match status" value="1"/>
</dbReference>
<dbReference type="SUPFAM" id="SSF53383">
    <property type="entry name" value="PLP-dependent transferases"/>
    <property type="match status" value="1"/>
</dbReference>
<dbReference type="PROSITE" id="PS00096">
    <property type="entry name" value="SHMT"/>
    <property type="match status" value="1"/>
</dbReference>
<protein>
    <recommendedName>
        <fullName evidence="1">Serine hydroxymethyltransferase</fullName>
        <shortName evidence="1">SHMT</shortName>
        <shortName evidence="1">Serine methylase</shortName>
        <ecNumber evidence="1">2.1.2.1</ecNumber>
    </recommendedName>
</protein>